<accession>B7HE54</accession>
<dbReference type="EC" id="3.6.4.-" evidence="1"/>
<dbReference type="EMBL" id="CP001176">
    <property type="protein sequence ID" value="ACK62509.1"/>
    <property type="molecule type" value="Genomic_DNA"/>
</dbReference>
<dbReference type="RefSeq" id="WP_000344449.1">
    <property type="nucleotide sequence ID" value="NZ_VEHB01000006.1"/>
</dbReference>
<dbReference type="SMR" id="B7HE54"/>
<dbReference type="KEGG" id="bcb:BCB4264_A4539"/>
<dbReference type="HOGENOM" id="CLU_055599_1_0_9"/>
<dbReference type="Proteomes" id="UP000007096">
    <property type="component" value="Chromosome"/>
</dbReference>
<dbReference type="GO" id="GO:0005737">
    <property type="term" value="C:cytoplasm"/>
    <property type="evidence" value="ECO:0007669"/>
    <property type="project" value="UniProtKB-SubCell"/>
</dbReference>
<dbReference type="GO" id="GO:0048476">
    <property type="term" value="C:Holliday junction resolvase complex"/>
    <property type="evidence" value="ECO:0007669"/>
    <property type="project" value="UniProtKB-UniRule"/>
</dbReference>
<dbReference type="GO" id="GO:0005524">
    <property type="term" value="F:ATP binding"/>
    <property type="evidence" value="ECO:0007669"/>
    <property type="project" value="UniProtKB-UniRule"/>
</dbReference>
<dbReference type="GO" id="GO:0016887">
    <property type="term" value="F:ATP hydrolysis activity"/>
    <property type="evidence" value="ECO:0007669"/>
    <property type="project" value="InterPro"/>
</dbReference>
<dbReference type="GO" id="GO:0000400">
    <property type="term" value="F:four-way junction DNA binding"/>
    <property type="evidence" value="ECO:0007669"/>
    <property type="project" value="UniProtKB-UniRule"/>
</dbReference>
<dbReference type="GO" id="GO:0009378">
    <property type="term" value="F:four-way junction helicase activity"/>
    <property type="evidence" value="ECO:0007669"/>
    <property type="project" value="InterPro"/>
</dbReference>
<dbReference type="GO" id="GO:0006310">
    <property type="term" value="P:DNA recombination"/>
    <property type="evidence" value="ECO:0007669"/>
    <property type="project" value="UniProtKB-UniRule"/>
</dbReference>
<dbReference type="GO" id="GO:0006281">
    <property type="term" value="P:DNA repair"/>
    <property type="evidence" value="ECO:0007669"/>
    <property type="project" value="UniProtKB-UniRule"/>
</dbReference>
<dbReference type="CDD" id="cd00009">
    <property type="entry name" value="AAA"/>
    <property type="match status" value="1"/>
</dbReference>
<dbReference type="Gene3D" id="1.10.8.60">
    <property type="match status" value="1"/>
</dbReference>
<dbReference type="Gene3D" id="3.40.50.300">
    <property type="entry name" value="P-loop containing nucleotide triphosphate hydrolases"/>
    <property type="match status" value="1"/>
</dbReference>
<dbReference type="Gene3D" id="1.10.10.10">
    <property type="entry name" value="Winged helix-like DNA-binding domain superfamily/Winged helix DNA-binding domain"/>
    <property type="match status" value="1"/>
</dbReference>
<dbReference type="HAMAP" id="MF_00016">
    <property type="entry name" value="DNA_HJ_migration_RuvB"/>
    <property type="match status" value="1"/>
</dbReference>
<dbReference type="InterPro" id="IPR003593">
    <property type="entry name" value="AAA+_ATPase"/>
</dbReference>
<dbReference type="InterPro" id="IPR041445">
    <property type="entry name" value="AAA_lid_4"/>
</dbReference>
<dbReference type="InterPro" id="IPR004605">
    <property type="entry name" value="DNA_helicase_Holl-junc_RuvB"/>
</dbReference>
<dbReference type="InterPro" id="IPR027417">
    <property type="entry name" value="P-loop_NTPase"/>
</dbReference>
<dbReference type="InterPro" id="IPR008824">
    <property type="entry name" value="RuvB-like_N"/>
</dbReference>
<dbReference type="InterPro" id="IPR008823">
    <property type="entry name" value="RuvB_C"/>
</dbReference>
<dbReference type="InterPro" id="IPR036388">
    <property type="entry name" value="WH-like_DNA-bd_sf"/>
</dbReference>
<dbReference type="InterPro" id="IPR036390">
    <property type="entry name" value="WH_DNA-bd_sf"/>
</dbReference>
<dbReference type="NCBIfam" id="NF000868">
    <property type="entry name" value="PRK00080.1"/>
    <property type="match status" value="1"/>
</dbReference>
<dbReference type="NCBIfam" id="TIGR00635">
    <property type="entry name" value="ruvB"/>
    <property type="match status" value="1"/>
</dbReference>
<dbReference type="PANTHER" id="PTHR42848">
    <property type="match status" value="1"/>
</dbReference>
<dbReference type="PANTHER" id="PTHR42848:SF1">
    <property type="entry name" value="HOLLIDAY JUNCTION BRANCH MIGRATION COMPLEX SUBUNIT RUVB"/>
    <property type="match status" value="1"/>
</dbReference>
<dbReference type="Pfam" id="PF17864">
    <property type="entry name" value="AAA_lid_4"/>
    <property type="match status" value="1"/>
</dbReference>
<dbReference type="Pfam" id="PF05491">
    <property type="entry name" value="RuvB_C"/>
    <property type="match status" value="1"/>
</dbReference>
<dbReference type="Pfam" id="PF05496">
    <property type="entry name" value="RuvB_N"/>
    <property type="match status" value="1"/>
</dbReference>
<dbReference type="SMART" id="SM00382">
    <property type="entry name" value="AAA"/>
    <property type="match status" value="1"/>
</dbReference>
<dbReference type="SUPFAM" id="SSF52540">
    <property type="entry name" value="P-loop containing nucleoside triphosphate hydrolases"/>
    <property type="match status" value="1"/>
</dbReference>
<dbReference type="SUPFAM" id="SSF46785">
    <property type="entry name" value="Winged helix' DNA-binding domain"/>
    <property type="match status" value="1"/>
</dbReference>
<keyword id="KW-0067">ATP-binding</keyword>
<keyword id="KW-0963">Cytoplasm</keyword>
<keyword id="KW-0227">DNA damage</keyword>
<keyword id="KW-0233">DNA recombination</keyword>
<keyword id="KW-0234">DNA repair</keyword>
<keyword id="KW-0238">DNA-binding</keyword>
<keyword id="KW-0378">Hydrolase</keyword>
<keyword id="KW-0547">Nucleotide-binding</keyword>
<reference key="1">
    <citation type="submission" date="2008-10" db="EMBL/GenBank/DDBJ databases">
        <title>Genome sequence of Bacillus cereus B4264.</title>
        <authorList>
            <person name="Dodson R.J."/>
            <person name="Durkin A.S."/>
            <person name="Rosovitz M.J."/>
            <person name="Rasko D.A."/>
            <person name="Hoffmaster A."/>
            <person name="Ravel J."/>
            <person name="Sutton G."/>
        </authorList>
    </citation>
    <scope>NUCLEOTIDE SEQUENCE [LARGE SCALE GENOMIC DNA]</scope>
    <source>
        <strain>B4264</strain>
    </source>
</reference>
<feature type="chain" id="PRO_1000195200" description="Holliday junction branch migration complex subunit RuvB">
    <location>
        <begin position="1"/>
        <end position="333"/>
    </location>
</feature>
<feature type="region of interest" description="Large ATPase domain (RuvB-L)" evidence="1">
    <location>
        <begin position="1"/>
        <end position="182"/>
    </location>
</feature>
<feature type="region of interest" description="Small ATPAse domain (RuvB-S)" evidence="1">
    <location>
        <begin position="183"/>
        <end position="253"/>
    </location>
</feature>
<feature type="region of interest" description="Head domain (RuvB-H)" evidence="1">
    <location>
        <begin position="256"/>
        <end position="333"/>
    </location>
</feature>
<feature type="binding site" evidence="1">
    <location>
        <position position="21"/>
    </location>
    <ligand>
        <name>ATP</name>
        <dbReference type="ChEBI" id="CHEBI:30616"/>
    </ligand>
</feature>
<feature type="binding site" evidence="1">
    <location>
        <position position="22"/>
    </location>
    <ligand>
        <name>ATP</name>
        <dbReference type="ChEBI" id="CHEBI:30616"/>
    </ligand>
</feature>
<feature type="binding site" evidence="1">
    <location>
        <position position="63"/>
    </location>
    <ligand>
        <name>ATP</name>
        <dbReference type="ChEBI" id="CHEBI:30616"/>
    </ligand>
</feature>
<feature type="binding site" evidence="1">
    <location>
        <position position="66"/>
    </location>
    <ligand>
        <name>ATP</name>
        <dbReference type="ChEBI" id="CHEBI:30616"/>
    </ligand>
</feature>
<feature type="binding site" evidence="1">
    <location>
        <position position="67"/>
    </location>
    <ligand>
        <name>ATP</name>
        <dbReference type="ChEBI" id="CHEBI:30616"/>
    </ligand>
</feature>
<feature type="binding site" evidence="1">
    <location>
        <position position="67"/>
    </location>
    <ligand>
        <name>Mg(2+)</name>
        <dbReference type="ChEBI" id="CHEBI:18420"/>
    </ligand>
</feature>
<feature type="binding site" evidence="1">
    <location>
        <position position="68"/>
    </location>
    <ligand>
        <name>ATP</name>
        <dbReference type="ChEBI" id="CHEBI:30616"/>
    </ligand>
</feature>
<feature type="binding site" evidence="1">
    <location>
        <begin position="129"/>
        <end position="131"/>
    </location>
    <ligand>
        <name>ATP</name>
        <dbReference type="ChEBI" id="CHEBI:30616"/>
    </ligand>
</feature>
<feature type="binding site" evidence="1">
    <location>
        <position position="172"/>
    </location>
    <ligand>
        <name>ATP</name>
        <dbReference type="ChEBI" id="CHEBI:30616"/>
    </ligand>
</feature>
<feature type="binding site" evidence="1">
    <location>
        <position position="182"/>
    </location>
    <ligand>
        <name>ATP</name>
        <dbReference type="ChEBI" id="CHEBI:30616"/>
    </ligand>
</feature>
<feature type="binding site" evidence="1">
    <location>
        <position position="219"/>
    </location>
    <ligand>
        <name>ATP</name>
        <dbReference type="ChEBI" id="CHEBI:30616"/>
    </ligand>
</feature>
<feature type="binding site" evidence="1">
    <location>
        <position position="311"/>
    </location>
    <ligand>
        <name>DNA</name>
        <dbReference type="ChEBI" id="CHEBI:16991"/>
    </ligand>
</feature>
<feature type="binding site" evidence="1">
    <location>
        <position position="316"/>
    </location>
    <ligand>
        <name>DNA</name>
        <dbReference type="ChEBI" id="CHEBI:16991"/>
    </ligand>
</feature>
<proteinExistence type="inferred from homology"/>
<organism>
    <name type="scientific">Bacillus cereus (strain B4264)</name>
    <dbReference type="NCBI Taxonomy" id="405532"/>
    <lineage>
        <taxon>Bacteria</taxon>
        <taxon>Bacillati</taxon>
        <taxon>Bacillota</taxon>
        <taxon>Bacilli</taxon>
        <taxon>Bacillales</taxon>
        <taxon>Bacillaceae</taxon>
        <taxon>Bacillus</taxon>
        <taxon>Bacillus cereus group</taxon>
    </lineage>
</organism>
<gene>
    <name evidence="1" type="primary">ruvB</name>
    <name type="ordered locus">BCB4264_A4539</name>
</gene>
<sequence length="333" mass="37021">MDERLLSGESAYEDADLEYSLRPQTLRQYIGQDKAKHNLEVFIEAAKMREETLDHVLLYGPPGLGKTTLANIIANEMGVNVRTTSGPAIERPGDLAAVLTALQPGDVLFIDEIHRLHRSIEEVLYPAMEDFCLDIVIGKGPSARSVRLDLPPFTLVGATTRAGALSAPLRDRFGVLSRLEYYTVDQLSAIVERTAEVFEVEIDSLAALEIARRARGTPRIANRLLRRVRDFAQVRGNGTVTMEITQMALELLQVDKLGLDHIDHKLLLGIIEKFRGGPVGLETVSATIGEESHTIEDVYEPYLLQIGFLQRTPRGRIVTPLAYEHFGMEIPKV</sequence>
<evidence type="ECO:0000255" key="1">
    <source>
        <dbReference type="HAMAP-Rule" id="MF_00016"/>
    </source>
</evidence>
<protein>
    <recommendedName>
        <fullName evidence="1">Holliday junction branch migration complex subunit RuvB</fullName>
        <ecNumber evidence="1">3.6.4.-</ecNumber>
    </recommendedName>
</protein>
<comment type="function">
    <text evidence="1">The RuvA-RuvB-RuvC complex processes Holliday junction (HJ) DNA during genetic recombination and DNA repair, while the RuvA-RuvB complex plays an important role in the rescue of blocked DNA replication forks via replication fork reversal (RFR). RuvA specifically binds to HJ cruciform DNA, conferring on it an open structure. The RuvB hexamer acts as an ATP-dependent pump, pulling dsDNA into and through the RuvAB complex. RuvB forms 2 homohexamers on either side of HJ DNA bound by 1 or 2 RuvA tetramers; 4 subunits per hexamer contact DNA at a time. Coordinated motions by a converter formed by DNA-disengaged RuvB subunits stimulates ATP hydrolysis and nucleotide exchange. Immobilization of the converter enables RuvB to convert the ATP-contained energy into a lever motion, pulling 2 nucleotides of DNA out of the RuvA tetramer per ATP hydrolyzed, thus driving DNA branch migration. The RuvB motors rotate together with the DNA substrate, which together with the progressing nucleotide cycle form the mechanistic basis for DNA recombination by continuous HJ branch migration. Branch migration allows RuvC to scan DNA until it finds its consensus sequence, where it cleaves and resolves cruciform DNA.</text>
</comment>
<comment type="catalytic activity">
    <reaction evidence="1">
        <text>ATP + H2O = ADP + phosphate + H(+)</text>
        <dbReference type="Rhea" id="RHEA:13065"/>
        <dbReference type="ChEBI" id="CHEBI:15377"/>
        <dbReference type="ChEBI" id="CHEBI:15378"/>
        <dbReference type="ChEBI" id="CHEBI:30616"/>
        <dbReference type="ChEBI" id="CHEBI:43474"/>
        <dbReference type="ChEBI" id="CHEBI:456216"/>
    </reaction>
</comment>
<comment type="subunit">
    <text evidence="1">Homohexamer. Forms an RuvA(8)-RuvB(12)-Holliday junction (HJ) complex. HJ DNA is sandwiched between 2 RuvA tetramers; dsDNA enters through RuvA and exits via RuvB. An RuvB hexamer assembles on each DNA strand where it exits the tetramer. Each RuvB hexamer is contacted by two RuvA subunits (via domain III) on 2 adjacent RuvB subunits; this complex drives branch migration. In the full resolvosome a probable DNA-RuvA(4)-RuvB(12)-RuvC(2) complex forms which resolves the HJ.</text>
</comment>
<comment type="subcellular location">
    <subcellularLocation>
        <location evidence="1">Cytoplasm</location>
    </subcellularLocation>
</comment>
<comment type="domain">
    <text evidence="1">Has 3 domains, the large (RuvB-L) and small ATPase (RuvB-S) domains and the C-terminal head (RuvB-H) domain. The head domain binds DNA, while the ATPase domains jointly bind ATP, ADP or are empty depending on the state of the subunit in the translocation cycle. During a single DNA translocation step the structure of each domain remains the same, but their relative positions change.</text>
</comment>
<comment type="similarity">
    <text evidence="1">Belongs to the RuvB family.</text>
</comment>
<name>RUVB_BACC4</name>